<gene>
    <name evidence="1" type="primary">argC</name>
    <name type="ordered locus">cauri_1352</name>
</gene>
<keyword id="KW-0028">Amino-acid biosynthesis</keyword>
<keyword id="KW-0055">Arginine biosynthesis</keyword>
<keyword id="KW-0963">Cytoplasm</keyword>
<keyword id="KW-0521">NADP</keyword>
<keyword id="KW-0560">Oxidoreductase</keyword>
<keyword id="KW-1185">Reference proteome</keyword>
<feature type="chain" id="PRO_1000123239" description="N-acetyl-gamma-glutamyl-phosphate reductase">
    <location>
        <begin position="1"/>
        <end position="347"/>
    </location>
</feature>
<feature type="active site" evidence="1">
    <location>
        <position position="151"/>
    </location>
</feature>
<dbReference type="EC" id="1.2.1.38" evidence="1"/>
<dbReference type="EMBL" id="CP001601">
    <property type="protein sequence ID" value="ACP32945.1"/>
    <property type="molecule type" value="Genomic_DNA"/>
</dbReference>
<dbReference type="RefSeq" id="WP_010190060.1">
    <property type="nucleotide sequence ID" value="NC_012590.1"/>
</dbReference>
<dbReference type="SMR" id="C3PGJ1"/>
<dbReference type="STRING" id="548476.cauri_1352"/>
<dbReference type="GeneID" id="31923978"/>
<dbReference type="KEGG" id="car:cauri_1352"/>
<dbReference type="eggNOG" id="COG0002">
    <property type="taxonomic scope" value="Bacteria"/>
</dbReference>
<dbReference type="HOGENOM" id="CLU_006384_0_0_11"/>
<dbReference type="OrthoDB" id="9801289at2"/>
<dbReference type="UniPathway" id="UPA00068">
    <property type="reaction ID" value="UER00108"/>
</dbReference>
<dbReference type="Proteomes" id="UP000002077">
    <property type="component" value="Chromosome"/>
</dbReference>
<dbReference type="GO" id="GO:0005737">
    <property type="term" value="C:cytoplasm"/>
    <property type="evidence" value="ECO:0007669"/>
    <property type="project" value="UniProtKB-SubCell"/>
</dbReference>
<dbReference type="GO" id="GO:0003942">
    <property type="term" value="F:N-acetyl-gamma-glutamyl-phosphate reductase activity"/>
    <property type="evidence" value="ECO:0007669"/>
    <property type="project" value="UniProtKB-UniRule"/>
</dbReference>
<dbReference type="GO" id="GO:0051287">
    <property type="term" value="F:NAD binding"/>
    <property type="evidence" value="ECO:0007669"/>
    <property type="project" value="InterPro"/>
</dbReference>
<dbReference type="GO" id="GO:0070401">
    <property type="term" value="F:NADP+ binding"/>
    <property type="evidence" value="ECO:0007669"/>
    <property type="project" value="InterPro"/>
</dbReference>
<dbReference type="GO" id="GO:0006526">
    <property type="term" value="P:L-arginine biosynthetic process"/>
    <property type="evidence" value="ECO:0007669"/>
    <property type="project" value="UniProtKB-UniRule"/>
</dbReference>
<dbReference type="CDD" id="cd24148">
    <property type="entry name" value="AGPR_1_actinobacAGPR_like"/>
    <property type="match status" value="1"/>
</dbReference>
<dbReference type="CDD" id="cd23934">
    <property type="entry name" value="AGPR_1_C"/>
    <property type="match status" value="1"/>
</dbReference>
<dbReference type="FunFam" id="3.30.360.10:FF:000014">
    <property type="entry name" value="N-acetyl-gamma-glutamyl-phosphate reductase"/>
    <property type="match status" value="1"/>
</dbReference>
<dbReference type="Gene3D" id="3.30.360.10">
    <property type="entry name" value="Dihydrodipicolinate Reductase, domain 2"/>
    <property type="match status" value="1"/>
</dbReference>
<dbReference type="Gene3D" id="3.40.50.720">
    <property type="entry name" value="NAD(P)-binding Rossmann-like Domain"/>
    <property type="match status" value="1"/>
</dbReference>
<dbReference type="HAMAP" id="MF_00150">
    <property type="entry name" value="ArgC_type1"/>
    <property type="match status" value="1"/>
</dbReference>
<dbReference type="InterPro" id="IPR023013">
    <property type="entry name" value="AGPR_AS"/>
</dbReference>
<dbReference type="InterPro" id="IPR000706">
    <property type="entry name" value="AGPR_type-1"/>
</dbReference>
<dbReference type="InterPro" id="IPR036291">
    <property type="entry name" value="NAD(P)-bd_dom_sf"/>
</dbReference>
<dbReference type="InterPro" id="IPR050085">
    <property type="entry name" value="NAGSA_dehydrogenase"/>
</dbReference>
<dbReference type="InterPro" id="IPR000534">
    <property type="entry name" value="Semialdehyde_DH_NAD-bd"/>
</dbReference>
<dbReference type="NCBIfam" id="TIGR01850">
    <property type="entry name" value="argC"/>
    <property type="match status" value="1"/>
</dbReference>
<dbReference type="PANTHER" id="PTHR32338:SF10">
    <property type="entry name" value="N-ACETYL-GAMMA-GLUTAMYL-PHOSPHATE REDUCTASE, CHLOROPLASTIC-RELATED"/>
    <property type="match status" value="1"/>
</dbReference>
<dbReference type="PANTHER" id="PTHR32338">
    <property type="entry name" value="N-ACETYL-GAMMA-GLUTAMYL-PHOSPHATE REDUCTASE, CHLOROPLASTIC-RELATED-RELATED"/>
    <property type="match status" value="1"/>
</dbReference>
<dbReference type="Pfam" id="PF01118">
    <property type="entry name" value="Semialdhyde_dh"/>
    <property type="match status" value="1"/>
</dbReference>
<dbReference type="Pfam" id="PF22698">
    <property type="entry name" value="Semialdhyde_dhC_1"/>
    <property type="match status" value="1"/>
</dbReference>
<dbReference type="SMART" id="SM00859">
    <property type="entry name" value="Semialdhyde_dh"/>
    <property type="match status" value="1"/>
</dbReference>
<dbReference type="SUPFAM" id="SSF55347">
    <property type="entry name" value="Glyceraldehyde-3-phosphate dehydrogenase-like, C-terminal domain"/>
    <property type="match status" value="1"/>
</dbReference>
<dbReference type="SUPFAM" id="SSF51735">
    <property type="entry name" value="NAD(P)-binding Rossmann-fold domains"/>
    <property type="match status" value="1"/>
</dbReference>
<dbReference type="PROSITE" id="PS01224">
    <property type="entry name" value="ARGC"/>
    <property type="match status" value="1"/>
</dbReference>
<comment type="function">
    <text evidence="1">Catalyzes the NADPH-dependent reduction of N-acetyl-5-glutamyl phosphate to yield N-acetyl-L-glutamate 5-semialdehyde.</text>
</comment>
<comment type="catalytic activity">
    <reaction evidence="1">
        <text>N-acetyl-L-glutamate 5-semialdehyde + phosphate + NADP(+) = N-acetyl-L-glutamyl 5-phosphate + NADPH + H(+)</text>
        <dbReference type="Rhea" id="RHEA:21588"/>
        <dbReference type="ChEBI" id="CHEBI:15378"/>
        <dbReference type="ChEBI" id="CHEBI:29123"/>
        <dbReference type="ChEBI" id="CHEBI:43474"/>
        <dbReference type="ChEBI" id="CHEBI:57783"/>
        <dbReference type="ChEBI" id="CHEBI:57936"/>
        <dbReference type="ChEBI" id="CHEBI:58349"/>
        <dbReference type="EC" id="1.2.1.38"/>
    </reaction>
</comment>
<comment type="pathway">
    <text evidence="1">Amino-acid biosynthesis; L-arginine biosynthesis; N(2)-acetyl-L-ornithine from L-glutamate: step 3/4.</text>
</comment>
<comment type="subcellular location">
    <subcellularLocation>
        <location evidence="1">Cytoplasm</location>
    </subcellularLocation>
</comment>
<comment type="similarity">
    <text evidence="1">Belongs to the NAGSA dehydrogenase family. Type 1 subfamily.</text>
</comment>
<organism>
    <name type="scientific">Corynebacterium aurimucosum (strain ATCC 700975 / DSM 44827 / CIP 107346 / CN-1)</name>
    <name type="common">Corynebacterium nigricans</name>
    <dbReference type="NCBI Taxonomy" id="548476"/>
    <lineage>
        <taxon>Bacteria</taxon>
        <taxon>Bacillati</taxon>
        <taxon>Actinomycetota</taxon>
        <taxon>Actinomycetes</taxon>
        <taxon>Mycobacteriales</taxon>
        <taxon>Corynebacteriaceae</taxon>
        <taxon>Corynebacterium</taxon>
    </lineage>
</organism>
<sequence>MTISVAIAGATGYAGSEILRLLLSHPAYLSGDLRIGALTGHSNAGQRVSELMPHLPQLADRVIEDTTPEVLAGHDIVFLGLPHGHSADIGRQLGESVTVIDCAADFRLRSKEDWDAFYGGEYAGSWPYGIPEVPGNRDKLKGSNRVAVPGCFPTTITLGALPAVAKGLIEPDLSVIAITGVSGAGKKASVAQLGAETMGNLKAYKPGGTHRHTPEVLQNLQPFTQDSVSVSFTPVLAPLPRGILATITAPLKGDVDKHSVAQAFRDFYAEEPFCLVLPEDQQPETQNVVGTNMVHIQAHVDERTQRLVITAALDNLCKGTAGAAVQCMNLTLGWEETSGLPQAAVAP</sequence>
<reference key="1">
    <citation type="journal article" date="2010" name="BMC Genomics">
        <title>Complete genome sequence and lifestyle of black-pigmented Corynebacterium aurimucosum ATCC 700975 (formerly C. nigricans CN-1) isolated from a vaginal swab of a woman with spontaneous abortion.</title>
        <authorList>
            <person name="Trost E."/>
            <person name="Gotker S."/>
            <person name="Schneider J."/>
            <person name="Schneiker-Bekel S."/>
            <person name="Szczepanowski R."/>
            <person name="Tilker A."/>
            <person name="Viehoever P."/>
            <person name="Arnold W."/>
            <person name="Bekel T."/>
            <person name="Blom J."/>
            <person name="Gartemann K.H."/>
            <person name="Linke B."/>
            <person name="Goesmann A."/>
            <person name="Puhler A."/>
            <person name="Shukla S.K."/>
            <person name="Tauch A."/>
        </authorList>
    </citation>
    <scope>NUCLEOTIDE SEQUENCE [LARGE SCALE GENOMIC DNA]</scope>
    <source>
        <strain>ATCC 700975 / DSM 44827 / CIP 107346 / CN-1</strain>
    </source>
</reference>
<accession>C3PGJ1</accession>
<protein>
    <recommendedName>
        <fullName evidence="1">N-acetyl-gamma-glutamyl-phosphate reductase</fullName>
        <shortName evidence="1">AGPR</shortName>
        <ecNumber evidence="1">1.2.1.38</ecNumber>
    </recommendedName>
    <alternativeName>
        <fullName evidence="1">N-acetyl-glutamate semialdehyde dehydrogenase</fullName>
        <shortName evidence="1">NAGSA dehydrogenase</shortName>
    </alternativeName>
</protein>
<evidence type="ECO:0000255" key="1">
    <source>
        <dbReference type="HAMAP-Rule" id="MF_00150"/>
    </source>
</evidence>
<proteinExistence type="inferred from homology"/>
<name>ARGC_CORA7</name>